<gene>
    <name evidence="4" type="primary">Ugt1a8</name>
    <name type="synonym">Ugt1</name>
</gene>
<feature type="signal peptide" evidence="2">
    <location>
        <begin position="1"/>
        <end position="25"/>
    </location>
</feature>
<feature type="chain" id="PRO_0000036022" description="UDP-glucuronosyltransferase 1A8">
    <location>
        <begin position="26"/>
        <end position="530"/>
    </location>
</feature>
<feature type="transmembrane region" description="Helical" evidence="2">
    <location>
        <begin position="488"/>
        <end position="504"/>
    </location>
</feature>
<feature type="glycosylation site" description="N-linked (GlcNAc...) asparagine" evidence="2">
    <location>
        <position position="71"/>
    </location>
</feature>
<feature type="glycosylation site" description="N-linked (GlcNAc...) asparagine" evidence="2">
    <location>
        <position position="292"/>
    </location>
</feature>
<feature type="glycosylation site" description="N-linked (GlcNAc...) asparagine" evidence="2">
    <location>
        <position position="430"/>
    </location>
</feature>
<protein>
    <recommendedName>
        <fullName evidence="1">UDP-glucuronosyltransferase 1A8</fullName>
        <shortName evidence="1">UGT1A8</shortName>
        <ecNumber evidence="1">2.4.1.17</ecNumber>
    </recommendedName>
    <alternativeName>
        <fullName>A3</fullName>
    </alternativeName>
    <alternativeName>
        <fullName>UDP-glucuronosyltransferase 1-8</fullName>
        <shortName>UDPGT 1-8</shortName>
        <shortName>UGT1*8</shortName>
        <shortName>UGT1-08</shortName>
        <shortName>UGT1.8</shortName>
    </alternativeName>
</protein>
<name>UD18_RAT</name>
<sequence length="530" mass="60060">MAPSGCPPSLPLCVCLFLASGFAQAGRLLVVPMDGSHWFTMQMIVEKLSHRGHEVVVVIPEVSWHMGKSLNFTVKLLLVLNTLEDLNYHFKFFAHNQWKTQEVGMFSLLKHSGKGFFELLFSHCRSLFKDKKLVEYLKQSSFDAVFLDPFDVCGLILAKYFSLPSVVFSGGIFCHYLDEGAQCPSPPSYVPRILSKFTDTMTFKERVWNHLSYMKERAFCPYFFKTAVEIASEVLQTPVTMRDLFSPVSIWMFRTDFVLEFPRPMMPNMVYIGGINCHQGKPLSKEFEAYVNASGEHGIVVFSLGSMVSEIPEKKAMEIAEALGRIPQTLLWRYTGTRPSNLAKNTILVKWLPQNDLLGHPKARAFITHSGSHGIYEGICNGVPMVMMPLFGDQMDNAKRMETRGAGVTLNVLEMTADDLENALKTVINNKSYKENIMRLSSLHKDRPIEPLDLAVFWVEYVMRHKGAPHLRPAAHDLTWYQYHSLDVIGFLLAIVLTVVFIVYKSCAYGCRKCFGGKGRVKKSHKSKTH</sequence>
<evidence type="ECO:0000250" key="1">
    <source>
        <dbReference type="UniProtKB" id="Q9HAW9"/>
    </source>
</evidence>
<evidence type="ECO:0000255" key="2"/>
<evidence type="ECO:0000305" key="3"/>
<evidence type="ECO:0000312" key="4">
    <source>
        <dbReference type="RGD" id="708474"/>
    </source>
</evidence>
<comment type="function">
    <text evidence="1">UDP-glucuronosyltransferase (UGT) that catalyzes phase II biotransformation reactions in which lipophilic substrates are conjugated with glucuronic acid to increase the metabolite's water solubility, thereby facilitating excretion into either the urine or bile. Essential for the elimination and detoxification of drugs, xenobiotics and endogenous compounds. Catalyzes the glucuronidation of endogenous steroid hormones such as androgens and estrogens. Produces dihydrotestosterone (DHT) diglucuronide from the DHT after two subsequent glucoronidation steps. Involved in the glucuronidation of the phytochemical ferulic acid at the phenolic or the carboxylic acid group. Also catalyzes the glucuronidation of the isoflavones genistein, daidzein, glycitein, formononetin, biochanin A and prunetin, which are phytoestrogens with anticancer and cardiovascular properties. Involved in the glucuronidation of the AGTR1 angiotensin receptor antagonist caderastan, a drug which can inhibit the effect of angiotensin II. Also metabolizes mycophenolate, an immunosuppressive agent.</text>
</comment>
<comment type="catalytic activity">
    <reaction evidence="1">
        <text>glucuronate acceptor + UDP-alpha-D-glucuronate = acceptor beta-D-glucuronoside + UDP + H(+)</text>
        <dbReference type="Rhea" id="RHEA:21032"/>
        <dbReference type="ChEBI" id="CHEBI:15378"/>
        <dbReference type="ChEBI" id="CHEBI:58052"/>
        <dbReference type="ChEBI" id="CHEBI:58223"/>
        <dbReference type="ChEBI" id="CHEBI:132367"/>
        <dbReference type="ChEBI" id="CHEBI:132368"/>
        <dbReference type="EC" id="2.4.1.17"/>
    </reaction>
    <physiologicalReaction direction="left-to-right" evidence="1">
        <dbReference type="Rhea" id="RHEA:21033"/>
    </physiologicalReaction>
</comment>
<comment type="catalytic activity">
    <reaction evidence="1">
        <text>17beta-estradiol + UDP-alpha-D-glucuronate = 17beta-estradiol 3-O-(beta-D-glucuronate) + UDP + H(+)</text>
        <dbReference type="Rhea" id="RHEA:52460"/>
        <dbReference type="ChEBI" id="CHEBI:15378"/>
        <dbReference type="ChEBI" id="CHEBI:16469"/>
        <dbReference type="ChEBI" id="CHEBI:58052"/>
        <dbReference type="ChEBI" id="CHEBI:58223"/>
        <dbReference type="ChEBI" id="CHEBI:136641"/>
    </reaction>
    <physiologicalReaction direction="left-to-right" evidence="1">
        <dbReference type="Rhea" id="RHEA:52461"/>
    </physiologicalReaction>
</comment>
<comment type="catalytic activity">
    <reaction evidence="1">
        <text>17alpha-estradiol + UDP-alpha-D-glucuronate = 17alpha-estradiol 3-O-(beta-D-glucuronate) + UDP + H(+)</text>
        <dbReference type="Rhea" id="RHEA:52868"/>
        <dbReference type="ChEBI" id="CHEBI:15378"/>
        <dbReference type="ChEBI" id="CHEBI:17160"/>
        <dbReference type="ChEBI" id="CHEBI:57529"/>
        <dbReference type="ChEBI" id="CHEBI:58052"/>
        <dbReference type="ChEBI" id="CHEBI:58223"/>
    </reaction>
    <physiologicalReaction direction="left-to-right" evidence="1">
        <dbReference type="Rhea" id="RHEA:52869"/>
    </physiologicalReaction>
</comment>
<comment type="catalytic activity">
    <reaction evidence="1">
        <text>estrone + UDP-alpha-D-glucuronate = estrone 3-O-(beta-D-glucuronate) + UDP + H(+)</text>
        <dbReference type="Rhea" id="RHEA:52476"/>
        <dbReference type="ChEBI" id="CHEBI:15378"/>
        <dbReference type="ChEBI" id="CHEBI:17263"/>
        <dbReference type="ChEBI" id="CHEBI:58052"/>
        <dbReference type="ChEBI" id="CHEBI:58223"/>
        <dbReference type="ChEBI" id="CHEBI:136634"/>
    </reaction>
    <physiologicalReaction direction="left-to-right" evidence="1">
        <dbReference type="Rhea" id="RHEA:52477"/>
    </physiologicalReaction>
</comment>
<comment type="catalytic activity">
    <reaction evidence="1">
        <text>16alpha,17alpha-estriol + UDP-alpha-D-glucuronate = 16alpha,17alpha-estriol 3-O-(beta-D-glucuronate) + UDP + H(+)</text>
        <dbReference type="Rhea" id="RHEA:52924"/>
        <dbReference type="ChEBI" id="CHEBI:15378"/>
        <dbReference type="ChEBI" id="CHEBI:42156"/>
        <dbReference type="ChEBI" id="CHEBI:58052"/>
        <dbReference type="ChEBI" id="CHEBI:58223"/>
        <dbReference type="ChEBI" id="CHEBI:136882"/>
    </reaction>
    <physiologicalReaction direction="left-to-right" evidence="1">
        <dbReference type="Rhea" id="RHEA:52925"/>
    </physiologicalReaction>
</comment>
<comment type="catalytic activity">
    <reaction evidence="1">
        <text>2-hydroxy-17beta-estradiol + UDP-alpha-D-glucuronate = 2-hydroxy-17beta-estradiol 3-O-(beta-D-glucuronate) + UDP + H(+)</text>
        <dbReference type="Rhea" id="RHEA:53004"/>
        <dbReference type="ChEBI" id="CHEBI:15378"/>
        <dbReference type="ChEBI" id="CHEBI:28744"/>
        <dbReference type="ChEBI" id="CHEBI:58052"/>
        <dbReference type="ChEBI" id="CHEBI:58223"/>
        <dbReference type="ChEBI" id="CHEBI:136931"/>
    </reaction>
    <physiologicalReaction direction="left-to-right" evidence="1">
        <dbReference type="Rhea" id="RHEA:53005"/>
    </physiologicalReaction>
</comment>
<comment type="catalytic activity">
    <reaction evidence="1">
        <text>2-hydroxy-17beta-estradiol + UDP-alpha-D-glucuronate = 17beta-estradiol 2-O-(beta-D-glucuronate) + UDP + H(+)</text>
        <dbReference type="Rhea" id="RHEA:53032"/>
        <dbReference type="ChEBI" id="CHEBI:15378"/>
        <dbReference type="ChEBI" id="CHEBI:28744"/>
        <dbReference type="ChEBI" id="CHEBI:58052"/>
        <dbReference type="ChEBI" id="CHEBI:58223"/>
        <dbReference type="ChEBI" id="CHEBI:136933"/>
    </reaction>
    <physiologicalReaction direction="left-to-right" evidence="1">
        <dbReference type="Rhea" id="RHEA:53033"/>
    </physiologicalReaction>
</comment>
<comment type="catalytic activity">
    <reaction evidence="1">
        <text>2-hydroxyestrone + UDP-alpha-D-glucuronate = 2-hydroxyestrone 3-O-(beta-D-glucuronate) + UDP + H(+)</text>
        <dbReference type="Rhea" id="RHEA:53048"/>
        <dbReference type="ChEBI" id="CHEBI:1156"/>
        <dbReference type="ChEBI" id="CHEBI:15378"/>
        <dbReference type="ChEBI" id="CHEBI:58052"/>
        <dbReference type="ChEBI" id="CHEBI:58223"/>
        <dbReference type="ChEBI" id="CHEBI:136967"/>
    </reaction>
    <physiologicalReaction direction="left-to-right" evidence="1">
        <dbReference type="Rhea" id="RHEA:53049"/>
    </physiologicalReaction>
</comment>
<comment type="catalytic activity">
    <reaction evidence="1">
        <text>4-hydroxy-17beta-estradiol + UDP-alpha-D-glucuronate = 4-hydroxy-17beta-estradiol 3-O-(beta-D-glucuronate) + UDP + H(+)</text>
        <dbReference type="Rhea" id="RHEA:53036"/>
        <dbReference type="ChEBI" id="CHEBI:15378"/>
        <dbReference type="ChEBI" id="CHEBI:58052"/>
        <dbReference type="ChEBI" id="CHEBI:58223"/>
        <dbReference type="ChEBI" id="CHEBI:62845"/>
        <dbReference type="ChEBI" id="CHEBI:136936"/>
    </reaction>
    <physiologicalReaction direction="left-to-right" evidence="1">
        <dbReference type="Rhea" id="RHEA:53037"/>
    </physiologicalReaction>
</comment>
<comment type="catalytic activity">
    <reaction evidence="1">
        <text>4-hydroxy-17beta-estradiol + UDP-alpha-D-glucuronate = 17beta-estradiol 4-O-(beta-D-glucuronate) + UDP + H(+)</text>
        <dbReference type="Rhea" id="RHEA:53040"/>
        <dbReference type="ChEBI" id="CHEBI:15378"/>
        <dbReference type="ChEBI" id="CHEBI:58052"/>
        <dbReference type="ChEBI" id="CHEBI:58223"/>
        <dbReference type="ChEBI" id="CHEBI:62845"/>
        <dbReference type="ChEBI" id="CHEBI:136937"/>
    </reaction>
    <physiologicalReaction direction="left-to-right" evidence="1">
        <dbReference type="Rhea" id="RHEA:53041"/>
    </physiologicalReaction>
</comment>
<comment type="catalytic activity">
    <reaction evidence="1">
        <text>4-hydroxyestrone + UDP-alpha-D-glucuronate = 4-hydroxyestrone 3-O-(beta-D-glucuronate) + UDP + H(+)</text>
        <dbReference type="Rhea" id="RHEA:53052"/>
        <dbReference type="ChEBI" id="CHEBI:15378"/>
        <dbReference type="ChEBI" id="CHEBI:58052"/>
        <dbReference type="ChEBI" id="CHEBI:58223"/>
        <dbReference type="ChEBI" id="CHEBI:87602"/>
        <dbReference type="ChEBI" id="CHEBI:136969"/>
    </reaction>
    <physiologicalReaction direction="left-to-right" evidence="1">
        <dbReference type="Rhea" id="RHEA:53053"/>
    </physiologicalReaction>
</comment>
<comment type="catalytic activity">
    <reaction evidence="1">
        <text>4-hydroxyestrone + UDP-alpha-D-glucuronate = estrone 4-O-(beta-D-glucuronate) + UDP + H(+)</text>
        <dbReference type="Rhea" id="RHEA:53060"/>
        <dbReference type="ChEBI" id="CHEBI:15378"/>
        <dbReference type="ChEBI" id="CHEBI:58052"/>
        <dbReference type="ChEBI" id="CHEBI:58223"/>
        <dbReference type="ChEBI" id="CHEBI:87602"/>
        <dbReference type="ChEBI" id="CHEBI:136970"/>
    </reaction>
    <physiologicalReaction direction="left-to-right" evidence="1">
        <dbReference type="Rhea" id="RHEA:53061"/>
    </physiologicalReaction>
</comment>
<comment type="catalytic activity">
    <reaction evidence="1">
        <text>2-methoxy-17beta-estradiol + UDP-alpha-D-glucuronate = 2-methoxy-17beta-estradiol 3-O-(beta-D-glucuronate) + UDP + H(+)</text>
        <dbReference type="Rhea" id="RHEA:53072"/>
        <dbReference type="ChEBI" id="CHEBI:15378"/>
        <dbReference type="ChEBI" id="CHEBI:28955"/>
        <dbReference type="ChEBI" id="CHEBI:58052"/>
        <dbReference type="ChEBI" id="CHEBI:58223"/>
        <dbReference type="ChEBI" id="CHEBI:136974"/>
    </reaction>
    <physiologicalReaction direction="left-to-right" evidence="1">
        <dbReference type="Rhea" id="RHEA:53073"/>
    </physiologicalReaction>
</comment>
<comment type="catalytic activity">
    <reaction evidence="1">
        <text>2-methoxyestrone + UDP-alpha-D-glucuronate = 2-methoxyestrone 3-O-(beta-D-glucuronate) + UDP + H(+)</text>
        <dbReference type="Rhea" id="RHEA:53064"/>
        <dbReference type="ChEBI" id="CHEBI:1189"/>
        <dbReference type="ChEBI" id="CHEBI:15378"/>
        <dbReference type="ChEBI" id="CHEBI:58052"/>
        <dbReference type="ChEBI" id="CHEBI:58223"/>
        <dbReference type="ChEBI" id="CHEBI:136971"/>
    </reaction>
    <physiologicalReaction direction="left-to-right" evidence="1">
        <dbReference type="Rhea" id="RHEA:53065"/>
    </physiologicalReaction>
</comment>
<comment type="catalytic activity">
    <reaction evidence="1">
        <text>4-methoxy-17beta-estradiol + UDP-alpha-D-glucuronate = 4-methoxy-17beta-estradiol 3-O-(beta-D-glucuronate) + UDP + H(+)</text>
        <dbReference type="Rhea" id="RHEA:53080"/>
        <dbReference type="ChEBI" id="CHEBI:15378"/>
        <dbReference type="ChEBI" id="CHEBI:58052"/>
        <dbReference type="ChEBI" id="CHEBI:58223"/>
        <dbReference type="ChEBI" id="CHEBI:136975"/>
        <dbReference type="ChEBI" id="CHEBI:136976"/>
    </reaction>
    <physiologicalReaction direction="left-to-right" evidence="1">
        <dbReference type="Rhea" id="RHEA:53081"/>
    </physiologicalReaction>
</comment>
<comment type="catalytic activity">
    <reaction evidence="1">
        <text>4-methoxyestrone + UDP-alpha-D-glucuronate = 4-methoxyestrone 3-O-(beta-D-glucuronate) + UDP + H(+)</text>
        <dbReference type="Rhea" id="RHEA:53068"/>
        <dbReference type="ChEBI" id="CHEBI:15378"/>
        <dbReference type="ChEBI" id="CHEBI:58052"/>
        <dbReference type="ChEBI" id="CHEBI:58223"/>
        <dbReference type="ChEBI" id="CHEBI:136972"/>
        <dbReference type="ChEBI" id="CHEBI:136973"/>
    </reaction>
    <physiologicalReaction direction="left-to-right" evidence="1">
        <dbReference type="Rhea" id="RHEA:53069"/>
    </physiologicalReaction>
</comment>
<comment type="catalytic activity">
    <reaction evidence="1">
        <text>17beta-hydroxy-5alpha-androstan-3-one + UDP-alpha-D-glucuronate = 5alpha-dihydrotestosterone 17-O-(beta-D-glucuronate) + UDP + H(+)</text>
        <dbReference type="Rhea" id="RHEA:53000"/>
        <dbReference type="ChEBI" id="CHEBI:15378"/>
        <dbReference type="ChEBI" id="CHEBI:16330"/>
        <dbReference type="ChEBI" id="CHEBI:58052"/>
        <dbReference type="ChEBI" id="CHEBI:58223"/>
        <dbReference type="ChEBI" id="CHEBI:136914"/>
    </reaction>
    <physiologicalReaction direction="left-to-right" evidence="1">
        <dbReference type="Rhea" id="RHEA:53001"/>
    </physiologicalReaction>
</comment>
<comment type="catalytic activity">
    <reaction evidence="1">
        <text>5alpha-dihydrotestosterone 17-O-(beta-D-glucuronate) + UDP-alpha-D-glucuronate = 5alpha-dihydrotestosterone 17-O-[beta-D-glucuronosyl-(1-&gt;2)-glucuronate] + UDP + H(+)</text>
        <dbReference type="Rhea" id="RHEA:53388"/>
        <dbReference type="ChEBI" id="CHEBI:15378"/>
        <dbReference type="ChEBI" id="CHEBI:58052"/>
        <dbReference type="ChEBI" id="CHEBI:58223"/>
        <dbReference type="ChEBI" id="CHEBI:136914"/>
        <dbReference type="ChEBI" id="CHEBI:136916"/>
    </reaction>
    <physiologicalReaction direction="left-to-right" evidence="1">
        <dbReference type="Rhea" id="RHEA:53389"/>
    </physiologicalReaction>
</comment>
<comment type="catalytic activity">
    <reaction evidence="1">
        <text>prunetin + UDP-alpha-D-glucuronate = prunetin-4'-O-beta-D-glucuronide + UDP</text>
        <dbReference type="Rhea" id="RHEA:63588"/>
        <dbReference type="ChEBI" id="CHEBI:58052"/>
        <dbReference type="ChEBI" id="CHEBI:58223"/>
        <dbReference type="ChEBI" id="CHEBI:147403"/>
        <dbReference type="ChEBI" id="CHEBI:147404"/>
    </reaction>
    <physiologicalReaction direction="left-to-right" evidence="1">
        <dbReference type="Rhea" id="RHEA:63589"/>
    </physiologicalReaction>
</comment>
<comment type="catalytic activity">
    <reaction evidence="1">
        <text>prunetin + UDP-alpha-D-glucuronate = prunetin-5-O-beta-D-glucuronide + UDP</text>
        <dbReference type="Rhea" id="RHEA:63612"/>
        <dbReference type="ChEBI" id="CHEBI:58052"/>
        <dbReference type="ChEBI" id="CHEBI:58223"/>
        <dbReference type="ChEBI" id="CHEBI:147403"/>
        <dbReference type="ChEBI" id="CHEBI:147405"/>
    </reaction>
    <physiologicalReaction direction="left-to-right" evidence="1">
        <dbReference type="Rhea" id="RHEA:63613"/>
    </physiologicalReaction>
</comment>
<comment type="catalytic activity">
    <reaction evidence="1">
        <text>(E)-ferulate + UDP-alpha-D-glucuronate = (E)-4-O-(beta-D-glucuronosyl)-ferulate + UDP + H(+)</text>
        <dbReference type="Rhea" id="RHEA:79951"/>
        <dbReference type="ChEBI" id="CHEBI:15378"/>
        <dbReference type="ChEBI" id="CHEBI:29749"/>
        <dbReference type="ChEBI" id="CHEBI:58052"/>
        <dbReference type="ChEBI" id="CHEBI:58223"/>
        <dbReference type="ChEBI" id="CHEBI:231331"/>
    </reaction>
    <physiologicalReaction direction="left-to-right" evidence="1">
        <dbReference type="Rhea" id="RHEA:79952"/>
    </physiologicalReaction>
</comment>
<comment type="catalytic activity">
    <reaction evidence="1">
        <text>(E)-ferulate + UDP-alpha-D-glucuronate = (E)-ferulic acid beta-D-glucuronate ester + UDP</text>
        <dbReference type="Rhea" id="RHEA:79955"/>
        <dbReference type="ChEBI" id="CHEBI:29749"/>
        <dbReference type="ChEBI" id="CHEBI:58052"/>
        <dbReference type="ChEBI" id="CHEBI:58223"/>
        <dbReference type="ChEBI" id="CHEBI:231332"/>
    </reaction>
    <physiologicalReaction direction="left-to-right" evidence="1">
        <dbReference type="Rhea" id="RHEA:79956"/>
    </physiologicalReaction>
</comment>
<comment type="catalytic activity">
    <reaction evidence="1">
        <text>candesartan + UDP-alpha-D-glucuronate = candesartan O-beta-D-glucuronoside + UDP</text>
        <dbReference type="Rhea" id="RHEA:63724"/>
        <dbReference type="ChEBI" id="CHEBI:58052"/>
        <dbReference type="ChEBI" id="CHEBI:58223"/>
        <dbReference type="ChEBI" id="CHEBI:149509"/>
        <dbReference type="ChEBI" id="CHEBI:149522"/>
    </reaction>
    <physiologicalReaction direction="left-to-right" evidence="1">
        <dbReference type="Rhea" id="RHEA:63725"/>
    </physiologicalReaction>
</comment>
<comment type="catalytic activity">
    <reaction evidence="1">
        <text>mycophenolate + UDP-alpha-D-glucuronate = mycophenolate 7-O-beta-D-glucuronide + UDP + H(+)</text>
        <dbReference type="Rhea" id="RHEA:63704"/>
        <dbReference type="ChEBI" id="CHEBI:15378"/>
        <dbReference type="ChEBI" id="CHEBI:58052"/>
        <dbReference type="ChEBI" id="CHEBI:58223"/>
        <dbReference type="ChEBI" id="CHEBI:62932"/>
        <dbReference type="ChEBI" id="CHEBI:149486"/>
    </reaction>
    <physiologicalReaction direction="left-to-right" evidence="1">
        <dbReference type="Rhea" id="RHEA:63705"/>
    </physiologicalReaction>
</comment>
<comment type="subunit">
    <text evidence="1">Homodimers. Homooligomer. Interacts with UGT1A1, UGT1A3, UGT1A4, UGT1A6, UGT1A7, UGT1A8, UGT1A9 and UGT1A10 to form heterodimers.</text>
</comment>
<comment type="subcellular location">
    <subcellularLocation>
        <location evidence="1">Endoplasmic reticulum membrane</location>
        <topology evidence="2">Single-pass membrane protein</topology>
    </subcellularLocation>
</comment>
<comment type="alternative products">
    <event type="alternative splicing"/>
    <isoform>
        <id>Q64634-1</id>
        <name>1</name>
        <sequence type="displayed"/>
    </isoform>
    <text evidence="1">UGT1A8 is one of the isoforms produced at the UGT1A complex locus. The UGT1A complex locus produces different isoforms based on alternative use of promoters, first exons and terminal exons.</text>
</comment>
<comment type="similarity">
    <text evidence="3">Belongs to the UDP-glycosyltransferase family.</text>
</comment>
<reference key="1">
    <citation type="journal article" date="1995" name="J. Biochem.">
        <title>Drug-responsive and tissue-specific alternative expression of multiple first exons in rat UDP-glucuronosyltransferase family 1 (UGT1) gene complex.</title>
        <authorList>
            <person name="Emi Y."/>
            <person name="Ikushiro S."/>
            <person name="Iyanagi T."/>
        </authorList>
    </citation>
    <scope>NUCLEOTIDE SEQUENCE [GENOMIC DNA]</scope>
    <source>
        <strain>Wistar</strain>
    </source>
</reference>
<reference key="2">
    <citation type="journal article" date="1990" name="Biochem. Biophys. Res. Commun.">
        <title>Isolation and sequencing of rat liver bilirubin UDP-glucuronosyltransferase cDNA: possible alternate splicing of a common primary transcript.</title>
        <authorList>
            <person name="Sato H."/>
            <person name="Koiwai O."/>
            <person name="Tanabe K."/>
            <person name="Kashiwamata S."/>
        </authorList>
    </citation>
    <scope>NUCLEOTIDE SEQUENCE [MRNA] OF 286-530</scope>
    <source>
        <tissue>Liver</tissue>
    </source>
</reference>
<dbReference type="EC" id="2.4.1.17" evidence="1"/>
<dbReference type="EMBL" id="D38063">
    <property type="protein sequence ID" value="BAA07259.1"/>
    <property type="molecule type" value="Genomic_DNA"/>
</dbReference>
<dbReference type="EMBL" id="M34007">
    <property type="protein sequence ID" value="AAA42312.1"/>
    <property type="status" value="ALT_TERM"/>
    <property type="molecule type" value="mRNA"/>
</dbReference>
<dbReference type="SMR" id="Q64634"/>
<dbReference type="FunCoup" id="Q64634">
    <property type="interactions" value="17"/>
</dbReference>
<dbReference type="CAZy" id="GT1">
    <property type="family name" value="Glycosyltransferase Family 1"/>
</dbReference>
<dbReference type="GlyCosmos" id="Q64634">
    <property type="glycosylation" value="3 sites, No reported glycans"/>
</dbReference>
<dbReference type="GlyGen" id="Q64634">
    <property type="glycosylation" value="3 sites"/>
</dbReference>
<dbReference type="PhosphoSitePlus" id="Q64634"/>
<dbReference type="PaxDb" id="10116-ENSRNOP00000065158"/>
<dbReference type="UCSC" id="RGD:708474">
    <molecule id="Q64634-1"/>
    <property type="organism name" value="rat"/>
</dbReference>
<dbReference type="AGR" id="RGD:708474"/>
<dbReference type="RGD" id="708474">
    <property type="gene designation" value="Ugt1a8"/>
</dbReference>
<dbReference type="eggNOG" id="KOG1192">
    <property type="taxonomic scope" value="Eukaryota"/>
</dbReference>
<dbReference type="InParanoid" id="Q64634"/>
<dbReference type="PhylomeDB" id="Q64634"/>
<dbReference type="BRENDA" id="2.4.1.17">
    <property type="organism ID" value="5301"/>
</dbReference>
<dbReference type="Reactome" id="R-RNO-156588">
    <property type="pathway name" value="Glucuronidation"/>
</dbReference>
<dbReference type="Reactome" id="R-RNO-9749641">
    <property type="pathway name" value="Aspirin ADME"/>
</dbReference>
<dbReference type="Reactome" id="R-RNO-9753281">
    <property type="pathway name" value="Paracetamol ADME"/>
</dbReference>
<dbReference type="PRO" id="PR:Q64634"/>
<dbReference type="Proteomes" id="UP000002494">
    <property type="component" value="Unplaced"/>
</dbReference>
<dbReference type="GO" id="GO:0005783">
    <property type="term" value="C:endoplasmic reticulum"/>
    <property type="evidence" value="ECO:0000318"/>
    <property type="project" value="GO_Central"/>
</dbReference>
<dbReference type="GO" id="GO:0005789">
    <property type="term" value="C:endoplasmic reticulum membrane"/>
    <property type="evidence" value="ECO:0007669"/>
    <property type="project" value="UniProtKB-SubCell"/>
</dbReference>
<dbReference type="GO" id="GO:0019899">
    <property type="term" value="F:enzyme binding"/>
    <property type="evidence" value="ECO:0000318"/>
    <property type="project" value="GO_Central"/>
</dbReference>
<dbReference type="GO" id="GO:0015020">
    <property type="term" value="F:glucuronosyltransferase activity"/>
    <property type="evidence" value="ECO:0000314"/>
    <property type="project" value="RGD"/>
</dbReference>
<dbReference type="GO" id="GO:1904682">
    <property type="term" value="P:cellular response to 3-methylcholanthrene"/>
    <property type="evidence" value="ECO:0000270"/>
    <property type="project" value="RGD"/>
</dbReference>
<dbReference type="GO" id="GO:0046226">
    <property type="term" value="P:coumarin catabolic process"/>
    <property type="evidence" value="ECO:0000314"/>
    <property type="project" value="RGD"/>
</dbReference>
<dbReference type="GO" id="GO:0001889">
    <property type="term" value="P:liver development"/>
    <property type="evidence" value="ECO:0000318"/>
    <property type="project" value="GO_Central"/>
</dbReference>
<dbReference type="GO" id="GO:0008202">
    <property type="term" value="P:steroid metabolic process"/>
    <property type="evidence" value="ECO:0000250"/>
    <property type="project" value="UniProtKB"/>
</dbReference>
<dbReference type="CDD" id="cd03784">
    <property type="entry name" value="GT1_Gtf-like"/>
    <property type="match status" value="1"/>
</dbReference>
<dbReference type="FunFam" id="3.40.50.2000:FF:000001">
    <property type="entry name" value="UDP-glucuronosyltransferase"/>
    <property type="match status" value="1"/>
</dbReference>
<dbReference type="FunFam" id="3.40.50.2000:FF:000092">
    <property type="entry name" value="UDP-glucuronosyltransferase"/>
    <property type="match status" value="1"/>
</dbReference>
<dbReference type="Gene3D" id="3.40.50.2000">
    <property type="entry name" value="Glycogen Phosphorylase B"/>
    <property type="match status" value="2"/>
</dbReference>
<dbReference type="InterPro" id="IPR050271">
    <property type="entry name" value="UDP-glycosyltransferase"/>
</dbReference>
<dbReference type="InterPro" id="IPR002213">
    <property type="entry name" value="UDP_glucos_trans"/>
</dbReference>
<dbReference type="InterPro" id="IPR035595">
    <property type="entry name" value="UDP_glycos_trans_CS"/>
</dbReference>
<dbReference type="PANTHER" id="PTHR48043">
    <property type="entry name" value="EG:EG0003.4 PROTEIN-RELATED"/>
    <property type="match status" value="1"/>
</dbReference>
<dbReference type="PANTHER" id="PTHR48043:SF161">
    <property type="entry name" value="UDP GLUCURONOSYLTRANSFERASE FAMILY 1 MEMBER A1"/>
    <property type="match status" value="1"/>
</dbReference>
<dbReference type="Pfam" id="PF00201">
    <property type="entry name" value="UDPGT"/>
    <property type="match status" value="1"/>
</dbReference>
<dbReference type="SUPFAM" id="SSF53756">
    <property type="entry name" value="UDP-Glycosyltransferase/glycogen phosphorylase"/>
    <property type="match status" value="1"/>
</dbReference>
<dbReference type="PROSITE" id="PS00375">
    <property type="entry name" value="UDPGT"/>
    <property type="match status" value="1"/>
</dbReference>
<accession>Q64634</accession>
<proteinExistence type="evidence at transcript level"/>
<organism>
    <name type="scientific">Rattus norvegicus</name>
    <name type="common">Rat</name>
    <dbReference type="NCBI Taxonomy" id="10116"/>
    <lineage>
        <taxon>Eukaryota</taxon>
        <taxon>Metazoa</taxon>
        <taxon>Chordata</taxon>
        <taxon>Craniata</taxon>
        <taxon>Vertebrata</taxon>
        <taxon>Euteleostomi</taxon>
        <taxon>Mammalia</taxon>
        <taxon>Eutheria</taxon>
        <taxon>Euarchontoglires</taxon>
        <taxon>Glires</taxon>
        <taxon>Rodentia</taxon>
        <taxon>Myomorpha</taxon>
        <taxon>Muroidea</taxon>
        <taxon>Muridae</taxon>
        <taxon>Murinae</taxon>
        <taxon>Rattus</taxon>
    </lineage>
</organism>
<keyword id="KW-0025">Alternative splicing</keyword>
<keyword id="KW-0256">Endoplasmic reticulum</keyword>
<keyword id="KW-0325">Glycoprotein</keyword>
<keyword id="KW-0328">Glycosyltransferase</keyword>
<keyword id="KW-0443">Lipid metabolism</keyword>
<keyword id="KW-0472">Membrane</keyword>
<keyword id="KW-1185">Reference proteome</keyword>
<keyword id="KW-0732">Signal</keyword>
<keyword id="KW-0808">Transferase</keyword>
<keyword id="KW-0812">Transmembrane</keyword>
<keyword id="KW-1133">Transmembrane helix</keyword>